<gene>
    <name evidence="1" type="primary">pdxH</name>
    <name type="ordered locus">Bcen_1957</name>
</gene>
<name>PDXH_BURO1</name>
<keyword id="KW-0285">Flavoprotein</keyword>
<keyword id="KW-0288">FMN</keyword>
<keyword id="KW-0560">Oxidoreductase</keyword>
<keyword id="KW-0664">Pyridoxine biosynthesis</keyword>
<sequence>MTTLADLRINYSRASLDEADAAPDPFAQFDRWFKEALAAKLPEPNTMTLATVGADGRPSARIVLIKGVDERGFVFFTNYESRKGHDLAVHPQAALLFYWIELERQVRIEGRIEKTSAEESDRYFASRPLGSRIGAWASEQSAVIDSRATLEAREKAVSERYGDNPPRPPHWGGYRLVPDSIEFWQGRPSRLHDRLLYTRDAAAASGWTISRLSP</sequence>
<proteinExistence type="inferred from homology"/>
<organism>
    <name type="scientific">Burkholderia orbicola (strain AU 1054)</name>
    <dbReference type="NCBI Taxonomy" id="331271"/>
    <lineage>
        <taxon>Bacteria</taxon>
        <taxon>Pseudomonadati</taxon>
        <taxon>Pseudomonadota</taxon>
        <taxon>Betaproteobacteria</taxon>
        <taxon>Burkholderiales</taxon>
        <taxon>Burkholderiaceae</taxon>
        <taxon>Burkholderia</taxon>
        <taxon>Burkholderia cepacia complex</taxon>
        <taxon>Burkholderia orbicola</taxon>
    </lineage>
</organism>
<accession>Q1BU45</accession>
<evidence type="ECO:0000255" key="1">
    <source>
        <dbReference type="HAMAP-Rule" id="MF_01629"/>
    </source>
</evidence>
<feature type="chain" id="PRO_0000255857" description="Pyridoxine/pyridoxamine 5'-phosphate oxidase">
    <location>
        <begin position="1"/>
        <end position="214"/>
    </location>
</feature>
<feature type="binding site" evidence="1">
    <location>
        <begin position="8"/>
        <end position="11"/>
    </location>
    <ligand>
        <name>substrate</name>
    </ligand>
</feature>
<feature type="binding site" evidence="1">
    <location>
        <begin position="61"/>
        <end position="66"/>
    </location>
    <ligand>
        <name>FMN</name>
        <dbReference type="ChEBI" id="CHEBI:58210"/>
    </ligand>
</feature>
<feature type="binding site" evidence="1">
    <location>
        <position position="66"/>
    </location>
    <ligand>
        <name>substrate</name>
    </ligand>
</feature>
<feature type="binding site" evidence="1">
    <location>
        <begin position="76"/>
        <end position="77"/>
    </location>
    <ligand>
        <name>FMN</name>
        <dbReference type="ChEBI" id="CHEBI:58210"/>
    </ligand>
</feature>
<feature type="binding site" evidence="1">
    <location>
        <position position="82"/>
    </location>
    <ligand>
        <name>FMN</name>
        <dbReference type="ChEBI" id="CHEBI:58210"/>
    </ligand>
</feature>
<feature type="binding site" evidence="1">
    <location>
        <position position="83"/>
    </location>
    <ligand>
        <name>FMN</name>
        <dbReference type="ChEBI" id="CHEBI:58210"/>
    </ligand>
</feature>
<feature type="binding site" evidence="1">
    <location>
        <position position="105"/>
    </location>
    <ligand>
        <name>FMN</name>
        <dbReference type="ChEBI" id="CHEBI:58210"/>
    </ligand>
</feature>
<feature type="binding site" evidence="1">
    <location>
        <position position="123"/>
    </location>
    <ligand>
        <name>substrate</name>
    </ligand>
</feature>
<feature type="binding site" evidence="1">
    <location>
        <position position="127"/>
    </location>
    <ligand>
        <name>substrate</name>
    </ligand>
</feature>
<feature type="binding site" evidence="1">
    <location>
        <position position="131"/>
    </location>
    <ligand>
        <name>substrate</name>
    </ligand>
</feature>
<feature type="binding site" evidence="1">
    <location>
        <begin position="140"/>
        <end position="141"/>
    </location>
    <ligand>
        <name>FMN</name>
        <dbReference type="ChEBI" id="CHEBI:58210"/>
    </ligand>
</feature>
<feature type="binding site" evidence="1">
    <location>
        <position position="184"/>
    </location>
    <ligand>
        <name>FMN</name>
        <dbReference type="ChEBI" id="CHEBI:58210"/>
    </ligand>
</feature>
<feature type="binding site" evidence="1">
    <location>
        <begin position="190"/>
        <end position="192"/>
    </location>
    <ligand>
        <name>substrate</name>
    </ligand>
</feature>
<feature type="binding site" evidence="1">
    <location>
        <position position="194"/>
    </location>
    <ligand>
        <name>FMN</name>
        <dbReference type="ChEBI" id="CHEBI:58210"/>
    </ligand>
</feature>
<reference key="1">
    <citation type="submission" date="2006-05" db="EMBL/GenBank/DDBJ databases">
        <title>Complete sequence of chromosome 1 of Burkholderia cenocepacia AU 1054.</title>
        <authorList>
            <consortium name="US DOE Joint Genome Institute"/>
            <person name="Copeland A."/>
            <person name="Lucas S."/>
            <person name="Lapidus A."/>
            <person name="Barry K."/>
            <person name="Detter J.C."/>
            <person name="Glavina del Rio T."/>
            <person name="Hammon N."/>
            <person name="Israni S."/>
            <person name="Dalin E."/>
            <person name="Tice H."/>
            <person name="Pitluck S."/>
            <person name="Chain P."/>
            <person name="Malfatti S."/>
            <person name="Shin M."/>
            <person name="Vergez L."/>
            <person name="Schmutz J."/>
            <person name="Larimer F."/>
            <person name="Land M."/>
            <person name="Hauser L."/>
            <person name="Kyrpides N."/>
            <person name="Lykidis A."/>
            <person name="LiPuma J.J."/>
            <person name="Konstantinidis K."/>
            <person name="Tiedje J.M."/>
            <person name="Richardson P."/>
        </authorList>
    </citation>
    <scope>NUCLEOTIDE SEQUENCE [LARGE SCALE GENOMIC DNA]</scope>
    <source>
        <strain>AU 1054</strain>
    </source>
</reference>
<dbReference type="EC" id="1.4.3.5" evidence="1"/>
<dbReference type="EMBL" id="CP000378">
    <property type="protein sequence ID" value="ABF76860.1"/>
    <property type="molecule type" value="Genomic_DNA"/>
</dbReference>
<dbReference type="SMR" id="Q1BU45"/>
<dbReference type="HOGENOM" id="CLU_032263_2_2_4"/>
<dbReference type="UniPathway" id="UPA01068">
    <property type="reaction ID" value="UER00304"/>
</dbReference>
<dbReference type="UniPathway" id="UPA01068">
    <property type="reaction ID" value="UER00305"/>
</dbReference>
<dbReference type="GO" id="GO:0010181">
    <property type="term" value="F:FMN binding"/>
    <property type="evidence" value="ECO:0007669"/>
    <property type="project" value="UniProtKB-UniRule"/>
</dbReference>
<dbReference type="GO" id="GO:0004733">
    <property type="term" value="F:pyridoxamine phosphate oxidase activity"/>
    <property type="evidence" value="ECO:0007669"/>
    <property type="project" value="UniProtKB-UniRule"/>
</dbReference>
<dbReference type="GO" id="GO:0008615">
    <property type="term" value="P:pyridoxine biosynthetic process"/>
    <property type="evidence" value="ECO:0007669"/>
    <property type="project" value="UniProtKB-KW"/>
</dbReference>
<dbReference type="FunFam" id="2.30.110.10:FF:000005">
    <property type="entry name" value="NAD(P)H-hydrate epimerase"/>
    <property type="match status" value="1"/>
</dbReference>
<dbReference type="Gene3D" id="2.30.110.10">
    <property type="entry name" value="Electron Transport, Fmn-binding Protein, Chain A"/>
    <property type="match status" value="1"/>
</dbReference>
<dbReference type="HAMAP" id="MF_01629">
    <property type="entry name" value="PdxH"/>
    <property type="match status" value="1"/>
</dbReference>
<dbReference type="InterPro" id="IPR000659">
    <property type="entry name" value="Pyridox_Oxase"/>
</dbReference>
<dbReference type="InterPro" id="IPR019740">
    <property type="entry name" value="Pyridox_Oxase_CS"/>
</dbReference>
<dbReference type="InterPro" id="IPR011576">
    <property type="entry name" value="Pyridox_Oxase_N"/>
</dbReference>
<dbReference type="InterPro" id="IPR019576">
    <property type="entry name" value="Pyridoxamine_oxidase_dimer_C"/>
</dbReference>
<dbReference type="InterPro" id="IPR012349">
    <property type="entry name" value="Split_barrel_FMN-bd"/>
</dbReference>
<dbReference type="NCBIfam" id="TIGR00558">
    <property type="entry name" value="pdxH"/>
    <property type="match status" value="1"/>
</dbReference>
<dbReference type="NCBIfam" id="NF004231">
    <property type="entry name" value="PRK05679.1"/>
    <property type="match status" value="1"/>
</dbReference>
<dbReference type="PANTHER" id="PTHR10851:SF0">
    <property type="entry name" value="PYRIDOXINE-5'-PHOSPHATE OXIDASE"/>
    <property type="match status" value="1"/>
</dbReference>
<dbReference type="PANTHER" id="PTHR10851">
    <property type="entry name" value="PYRIDOXINE-5-PHOSPHATE OXIDASE"/>
    <property type="match status" value="1"/>
</dbReference>
<dbReference type="Pfam" id="PF10590">
    <property type="entry name" value="PNP_phzG_C"/>
    <property type="match status" value="1"/>
</dbReference>
<dbReference type="Pfam" id="PF01243">
    <property type="entry name" value="PNPOx_N"/>
    <property type="match status" value="1"/>
</dbReference>
<dbReference type="PIRSF" id="PIRSF000190">
    <property type="entry name" value="Pyd_amn-ph_oxd"/>
    <property type="match status" value="1"/>
</dbReference>
<dbReference type="SUPFAM" id="SSF50475">
    <property type="entry name" value="FMN-binding split barrel"/>
    <property type="match status" value="1"/>
</dbReference>
<dbReference type="PROSITE" id="PS01064">
    <property type="entry name" value="PYRIDOX_OXIDASE"/>
    <property type="match status" value="1"/>
</dbReference>
<comment type="function">
    <text evidence="1">Catalyzes the oxidation of either pyridoxine 5'-phosphate (PNP) or pyridoxamine 5'-phosphate (PMP) into pyridoxal 5'-phosphate (PLP).</text>
</comment>
<comment type="catalytic activity">
    <reaction evidence="1">
        <text>pyridoxamine 5'-phosphate + O2 + H2O = pyridoxal 5'-phosphate + H2O2 + NH4(+)</text>
        <dbReference type="Rhea" id="RHEA:15817"/>
        <dbReference type="ChEBI" id="CHEBI:15377"/>
        <dbReference type="ChEBI" id="CHEBI:15379"/>
        <dbReference type="ChEBI" id="CHEBI:16240"/>
        <dbReference type="ChEBI" id="CHEBI:28938"/>
        <dbReference type="ChEBI" id="CHEBI:58451"/>
        <dbReference type="ChEBI" id="CHEBI:597326"/>
        <dbReference type="EC" id="1.4.3.5"/>
    </reaction>
</comment>
<comment type="catalytic activity">
    <reaction evidence="1">
        <text>pyridoxine 5'-phosphate + O2 = pyridoxal 5'-phosphate + H2O2</text>
        <dbReference type="Rhea" id="RHEA:15149"/>
        <dbReference type="ChEBI" id="CHEBI:15379"/>
        <dbReference type="ChEBI" id="CHEBI:16240"/>
        <dbReference type="ChEBI" id="CHEBI:58589"/>
        <dbReference type="ChEBI" id="CHEBI:597326"/>
        <dbReference type="EC" id="1.4.3.5"/>
    </reaction>
</comment>
<comment type="cofactor">
    <cofactor evidence="1">
        <name>FMN</name>
        <dbReference type="ChEBI" id="CHEBI:58210"/>
    </cofactor>
    <text evidence="1">Binds 1 FMN per subunit.</text>
</comment>
<comment type="pathway">
    <text evidence="1">Cofactor metabolism; pyridoxal 5'-phosphate salvage; pyridoxal 5'-phosphate from pyridoxamine 5'-phosphate: step 1/1.</text>
</comment>
<comment type="pathway">
    <text evidence="1">Cofactor metabolism; pyridoxal 5'-phosphate salvage; pyridoxal 5'-phosphate from pyridoxine 5'-phosphate: step 1/1.</text>
</comment>
<comment type="subunit">
    <text evidence="1">Homodimer.</text>
</comment>
<comment type="similarity">
    <text evidence="1">Belongs to the pyridoxamine 5'-phosphate oxidase family.</text>
</comment>
<protein>
    <recommendedName>
        <fullName evidence="1">Pyridoxine/pyridoxamine 5'-phosphate oxidase</fullName>
        <ecNumber evidence="1">1.4.3.5</ecNumber>
    </recommendedName>
    <alternativeName>
        <fullName evidence="1">PNP/PMP oxidase</fullName>
        <shortName evidence="1">PNPOx</shortName>
    </alternativeName>
    <alternativeName>
        <fullName evidence="1">Pyridoxal 5'-phosphate synthase</fullName>
    </alternativeName>
</protein>